<comment type="function">
    <text evidence="3">Non-catalytic component of the 20S core proteasome complex involved in the proteolytic degradation of most intracellular proteins. This complex plays numerous essential roles within the cell by associating with different regulatory particles. Associated with two 19S regulatory particles, forms the 26S proteasome and thus participates in the ATP-dependent degradation of ubiquitinated proteins. The 26S proteasome plays a key role in the maintenance of protein homeostasis by removing misfolded or damaged proteins that could impair cellular functions, and by removing proteins whose functions are no longer required. Associated with the PA200 or PA28, the 20S proteasome mediates ubiquitin-independent protein degradation. This type of proteolysis is required in several pathways including spermatogenesis (20S-PA200 complex) or generation of a subset of MHC class I-presented antigenic peptides (20S-PA28 complex).</text>
</comment>
<comment type="subunit">
    <text evidence="2 3">The 26S proteasome consists of a 20S proteasome core and two 19S regulatory subunits. The 20S proteasome core is a barrel-shaped complex made of 28 subunits that are arranged in four stacked rings. The two outer rings are each formed by seven alpha subunits, and the two inner rings are formed by seven beta subunits. The proteolytic activity is exerted by three beta-subunits PSMB5, PSMB6 and PSMB7. Interacts with SERPINB2. Interacts with RFPL4A.</text>
</comment>
<comment type="subcellular location">
    <subcellularLocation>
        <location evidence="3">Cytoplasm</location>
    </subcellularLocation>
    <subcellularLocation>
        <location evidence="3">Nucleus</location>
    </subcellularLocation>
    <text evidence="3">Translocated from the cytoplasm into the nucleus following interaction with AKIRIN2, which bridges the proteasome with the nuclear import receptor IPO9.</text>
</comment>
<comment type="tissue specificity">
    <text>Ubiquitous.</text>
</comment>
<comment type="induction">
    <text evidence="5 6">Up-regulated in prefrontal cortex (PFC) after nicotine exposure. Down-regulated by theophylline (THP) and 1,3-dinitrobenzene (DNB), two reprotoxic agents thought to induce infertility.</text>
</comment>
<comment type="similarity">
    <text evidence="4">Belongs to the peptidase T1B family.</text>
</comment>
<evidence type="ECO:0000250" key="1"/>
<evidence type="ECO:0000250" key="2">
    <source>
        <dbReference type="UniProtKB" id="O09061"/>
    </source>
</evidence>
<evidence type="ECO:0000250" key="3">
    <source>
        <dbReference type="UniProtKB" id="P20618"/>
    </source>
</evidence>
<evidence type="ECO:0000255" key="4">
    <source>
        <dbReference type="PROSITE-ProRule" id="PRU00809"/>
    </source>
</evidence>
<evidence type="ECO:0000269" key="5">
    <source>
    </source>
</evidence>
<evidence type="ECO:0000269" key="6">
    <source>
    </source>
</evidence>
<evidence type="ECO:0000269" key="7">
    <source>
    </source>
</evidence>
<evidence type="ECO:0007829" key="8">
    <source>
        <dbReference type="PDB" id="6TU3"/>
    </source>
</evidence>
<reference key="1">
    <citation type="journal article" date="1990" name="FEBS Lett.">
        <title>cDNA cloning and sequencing of component C5 of proteasomes from rat hepatoma cells.</title>
        <authorList>
            <person name="Tamura T."/>
            <person name="Tanaka K."/>
            <person name="Kumatori A."/>
            <person name="Yamada F."/>
            <person name="Tsurumi C."/>
            <person name="Fujiwara T."/>
            <person name="Ichihara A."/>
            <person name="Tokunaga F."/>
            <person name="Aruga R."/>
            <person name="Iwanaga S."/>
        </authorList>
    </citation>
    <scope>NUCLEOTIDE SEQUENCE [MRNA]</scope>
</reference>
<reference key="2">
    <citation type="journal article" date="1990" name="FEBS Lett.">
        <title>The NH2-terminal residues of rat liver proteasome (multicatalytic proteinase complex) subunits, C2, C3 and C8, are N alpha-acetylated.</title>
        <authorList>
            <person name="Tokunaga F."/>
            <person name="Aruga R."/>
            <person name="Iwanaga S."/>
            <person name="Tanaka K."/>
            <person name="Ichihara A."/>
            <person name="Takao T."/>
            <person name="Shimonishi Y."/>
        </authorList>
    </citation>
    <scope>PROTEIN SEQUENCE OF 28-47</scope>
    <source>
        <tissue>Liver</tissue>
    </source>
</reference>
<reference key="3">
    <citation type="journal article" date="2004" name="Brain Res. Mol. Brain Res.">
        <title>Nicotine coregulates multiple pathways involved in protein modification/degradation in rat brain.</title>
        <authorList>
            <person name="Kane J.K."/>
            <person name="Konu O."/>
            <person name="Ma J.Z."/>
            <person name="Li M.D."/>
        </authorList>
    </citation>
    <scope>INDUCTION BY NICOTINE</scope>
</reference>
<reference key="4">
    <citation type="journal article" date="2007" name="Biol. Reprod.">
        <title>Differential expression of genes encoding constitutive and inducible 20S proteasomal core subunits in the testis and epididymis of theophylline- or 1,3-dinitrobenzene-exposed rats.</title>
        <authorList>
            <person name="Tengowski M.W."/>
            <person name="Feng D."/>
            <person name="Sutovsky M."/>
            <person name="Sutovsky P."/>
        </authorList>
    </citation>
    <scope>INDUCTION BY THP AND DNB</scope>
</reference>
<feature type="propeptide" id="PRO_0000259625" evidence="7">
    <location>
        <begin position="1"/>
        <end position="27"/>
    </location>
</feature>
<feature type="chain" id="PRO_0000148032" description="Proteasome subunit beta type-1">
    <location>
        <begin position="28"/>
        <end position="240"/>
    </location>
</feature>
<feature type="modified residue" description="N-acetylmethionine" evidence="3">
    <location>
        <position position="1"/>
    </location>
</feature>
<feature type="modified residue" description="Phosphoserine" evidence="3">
    <location>
        <position position="61"/>
    </location>
</feature>
<feature type="modified residue" description="Phosphoserine" evidence="3">
    <location>
        <position position="67"/>
    </location>
</feature>
<feature type="modified residue" description="Phosphotyrosine" evidence="2">
    <location>
        <position position="149"/>
    </location>
</feature>
<feature type="modified residue" description="Phosphoserine" evidence="3">
    <location>
        <position position="161"/>
    </location>
</feature>
<feature type="modified residue" description="N6-acetyllysine" evidence="3">
    <location>
        <position position="203"/>
    </location>
</feature>
<feature type="glycosylation site" description="O-linked (GlcNAc) serine" evidence="1">
    <location>
        <position position="57"/>
    </location>
</feature>
<feature type="glycosylation site" description="O-linked (GlcNAc) serine" evidence="1">
    <location>
        <position position="208"/>
    </location>
</feature>
<feature type="strand" evidence="8">
    <location>
        <begin position="38"/>
        <end position="43"/>
    </location>
</feature>
<feature type="strand" evidence="8">
    <location>
        <begin position="48"/>
        <end position="53"/>
    </location>
</feature>
<feature type="strand" evidence="8">
    <location>
        <begin position="56"/>
        <end position="58"/>
    </location>
</feature>
<feature type="strand" evidence="8">
    <location>
        <begin position="61"/>
        <end position="65"/>
    </location>
</feature>
<feature type="strand" evidence="8">
    <location>
        <begin position="70"/>
        <end position="74"/>
    </location>
</feature>
<feature type="strand" evidence="8">
    <location>
        <begin position="77"/>
        <end position="80"/>
    </location>
</feature>
<feature type="helix" evidence="8">
    <location>
        <begin position="85"/>
        <end position="106"/>
    </location>
</feature>
<feature type="helix" evidence="8">
    <location>
        <begin position="112"/>
        <end position="125"/>
    </location>
</feature>
<feature type="strand" evidence="8">
    <location>
        <begin position="136"/>
        <end position="140"/>
    </location>
</feature>
<feature type="strand" evidence="8">
    <location>
        <begin position="148"/>
        <end position="151"/>
    </location>
</feature>
<feature type="strand" evidence="8">
    <location>
        <begin position="157"/>
        <end position="168"/>
    </location>
</feature>
<feature type="helix" evidence="8">
    <location>
        <begin position="169"/>
        <end position="179"/>
    </location>
</feature>
<feature type="helix" evidence="8">
    <location>
        <begin position="195"/>
        <end position="210"/>
    </location>
</feature>
<feature type="strand" evidence="8">
    <location>
        <begin position="218"/>
        <end position="225"/>
    </location>
</feature>
<feature type="strand" evidence="8">
    <location>
        <begin position="231"/>
        <end position="236"/>
    </location>
</feature>
<dbReference type="EMBL" id="X52783">
    <property type="protein sequence ID" value="CAA36987.1"/>
    <property type="molecule type" value="mRNA"/>
</dbReference>
<dbReference type="PIR" id="S09696">
    <property type="entry name" value="S09696"/>
</dbReference>
<dbReference type="RefSeq" id="NP_446042.1">
    <property type="nucleotide sequence ID" value="NM_053590.1"/>
</dbReference>
<dbReference type="PDB" id="6EPC">
    <property type="method" value="EM"/>
    <property type="resolution" value="12.30 A"/>
    <property type="chains" value="6=1-240"/>
</dbReference>
<dbReference type="PDB" id="6EPD">
    <property type="method" value="EM"/>
    <property type="resolution" value="15.40 A"/>
    <property type="chains" value="6=1-240"/>
</dbReference>
<dbReference type="PDB" id="6EPE">
    <property type="method" value="EM"/>
    <property type="resolution" value="12.80 A"/>
    <property type="chains" value="6=1-240"/>
</dbReference>
<dbReference type="PDB" id="6EPF">
    <property type="method" value="EM"/>
    <property type="resolution" value="11.80 A"/>
    <property type="chains" value="6=1-240"/>
</dbReference>
<dbReference type="PDB" id="6TU3">
    <property type="method" value="EM"/>
    <property type="resolution" value="2.70 A"/>
    <property type="chains" value="M/a=1-240"/>
</dbReference>
<dbReference type="PDBsum" id="6EPC"/>
<dbReference type="PDBsum" id="6EPD"/>
<dbReference type="PDBsum" id="6EPE"/>
<dbReference type="PDBsum" id="6EPF"/>
<dbReference type="PDBsum" id="6TU3"/>
<dbReference type="EMDB" id="EMD-10586"/>
<dbReference type="EMDB" id="EMD-3913"/>
<dbReference type="EMDB" id="EMD-3914"/>
<dbReference type="EMDB" id="EMD-3915"/>
<dbReference type="EMDB" id="EMD-3916"/>
<dbReference type="SMR" id="P18421"/>
<dbReference type="BioGRID" id="250178">
    <property type="interactions" value="2"/>
</dbReference>
<dbReference type="ComplexPortal" id="CPX-8965">
    <property type="entry name" value="30S proteasome complex"/>
</dbReference>
<dbReference type="FunCoup" id="P18421">
    <property type="interactions" value="3073"/>
</dbReference>
<dbReference type="IntAct" id="P18421">
    <property type="interactions" value="2"/>
</dbReference>
<dbReference type="STRING" id="10116.ENSRNOP00000002037"/>
<dbReference type="MEROPS" id="T01.986"/>
<dbReference type="GlyCosmos" id="P18421">
    <property type="glycosylation" value="2 sites, No reported glycans"/>
</dbReference>
<dbReference type="GlyGen" id="P18421">
    <property type="glycosylation" value="2 sites"/>
</dbReference>
<dbReference type="iPTMnet" id="P18421"/>
<dbReference type="PhosphoSitePlus" id="P18421"/>
<dbReference type="jPOST" id="P18421"/>
<dbReference type="PaxDb" id="10116-ENSRNOP00000002037"/>
<dbReference type="GeneID" id="94198"/>
<dbReference type="KEGG" id="rno:94198"/>
<dbReference type="UCSC" id="RGD:621092">
    <property type="organism name" value="rat"/>
</dbReference>
<dbReference type="AGR" id="RGD:621092"/>
<dbReference type="CTD" id="5689"/>
<dbReference type="RGD" id="621092">
    <property type="gene designation" value="Psmb1"/>
</dbReference>
<dbReference type="eggNOG" id="KOG0179">
    <property type="taxonomic scope" value="Eukaryota"/>
</dbReference>
<dbReference type="InParanoid" id="P18421"/>
<dbReference type="OrthoDB" id="268479at2759"/>
<dbReference type="PhylomeDB" id="P18421"/>
<dbReference type="Reactome" id="R-RNO-1169091">
    <property type="pathway name" value="Activation of NF-kappaB in B cells"/>
</dbReference>
<dbReference type="Reactome" id="R-RNO-1234176">
    <property type="pathway name" value="Oxygen-dependent proline hydroxylation of Hypoxia-inducible Factor Alpha"/>
</dbReference>
<dbReference type="Reactome" id="R-RNO-1236978">
    <property type="pathway name" value="Cross-presentation of soluble exogenous antigens (endosomes)"/>
</dbReference>
<dbReference type="Reactome" id="R-RNO-174084">
    <property type="pathway name" value="Autodegradation of Cdh1 by Cdh1:APC/C"/>
</dbReference>
<dbReference type="Reactome" id="R-RNO-174113">
    <property type="pathway name" value="SCF-beta-TrCP mediated degradation of Emi1"/>
</dbReference>
<dbReference type="Reactome" id="R-RNO-174154">
    <property type="pathway name" value="APC/C:Cdc20 mediated degradation of Securin"/>
</dbReference>
<dbReference type="Reactome" id="R-RNO-174178">
    <property type="pathway name" value="APC/C:Cdh1 mediated degradation of Cdc20 and other APC/C:Cdh1 targeted proteins in late mitosis/early G1"/>
</dbReference>
<dbReference type="Reactome" id="R-RNO-174184">
    <property type="pathway name" value="Cdc20:Phospho-APC/C mediated degradation of Cyclin A"/>
</dbReference>
<dbReference type="Reactome" id="R-RNO-187577">
    <property type="pathway name" value="SCF(Skp2)-mediated degradation of p27/p21"/>
</dbReference>
<dbReference type="Reactome" id="R-RNO-195253">
    <property type="pathway name" value="Degradation of beta-catenin by the destruction complex"/>
</dbReference>
<dbReference type="Reactome" id="R-RNO-2467813">
    <property type="pathway name" value="Separation of Sister Chromatids"/>
</dbReference>
<dbReference type="Reactome" id="R-RNO-349425">
    <property type="pathway name" value="Autodegradation of the E3 ubiquitin ligase COP1"/>
</dbReference>
<dbReference type="Reactome" id="R-RNO-350562">
    <property type="pathway name" value="Regulation of ornithine decarboxylase (ODC)"/>
</dbReference>
<dbReference type="Reactome" id="R-RNO-382556">
    <property type="pathway name" value="ABC-family proteins mediated transport"/>
</dbReference>
<dbReference type="Reactome" id="R-RNO-450408">
    <property type="pathway name" value="AUF1 (hnRNP D0) binds and destabilizes mRNA"/>
</dbReference>
<dbReference type="Reactome" id="R-RNO-4608870">
    <property type="pathway name" value="Asymmetric localization of PCP proteins"/>
</dbReference>
<dbReference type="Reactome" id="R-RNO-4641257">
    <property type="pathway name" value="Degradation of AXIN"/>
</dbReference>
<dbReference type="Reactome" id="R-RNO-4641258">
    <property type="pathway name" value="Degradation of DVL"/>
</dbReference>
<dbReference type="Reactome" id="R-RNO-5358346">
    <property type="pathway name" value="Hedgehog ligand biogenesis"/>
</dbReference>
<dbReference type="Reactome" id="R-RNO-5607761">
    <property type="pathway name" value="Dectin-1 mediated noncanonical NF-kB signaling"/>
</dbReference>
<dbReference type="Reactome" id="R-RNO-5610780">
    <property type="pathway name" value="Degradation of GLI1 by the proteasome"/>
</dbReference>
<dbReference type="Reactome" id="R-RNO-5610785">
    <property type="pathway name" value="GLI3 is processed to GLI3R by the proteasome"/>
</dbReference>
<dbReference type="Reactome" id="R-RNO-5632684">
    <property type="pathway name" value="Hedgehog 'on' state"/>
</dbReference>
<dbReference type="Reactome" id="R-RNO-5658442">
    <property type="pathway name" value="Regulation of RAS by GAPs"/>
</dbReference>
<dbReference type="Reactome" id="R-RNO-5668541">
    <property type="pathway name" value="TNFR2 non-canonical NF-kB pathway"/>
</dbReference>
<dbReference type="Reactome" id="R-RNO-5676590">
    <property type="pathway name" value="NIK--&gt;noncanonical NF-kB signaling"/>
</dbReference>
<dbReference type="Reactome" id="R-RNO-5687128">
    <property type="pathway name" value="MAPK6/MAPK4 signaling"/>
</dbReference>
<dbReference type="Reactome" id="R-RNO-5689603">
    <property type="pathway name" value="UCH proteinases"/>
</dbReference>
<dbReference type="Reactome" id="R-RNO-5689880">
    <property type="pathway name" value="Ub-specific processing proteases"/>
</dbReference>
<dbReference type="Reactome" id="R-RNO-6798695">
    <property type="pathway name" value="Neutrophil degranulation"/>
</dbReference>
<dbReference type="Reactome" id="R-RNO-68867">
    <property type="pathway name" value="Assembly of the pre-replicative complex"/>
</dbReference>
<dbReference type="Reactome" id="R-RNO-68949">
    <property type="pathway name" value="Orc1 removal from chromatin"/>
</dbReference>
<dbReference type="Reactome" id="R-RNO-69017">
    <property type="pathway name" value="CDK-mediated phosphorylation and removal of Cdc6"/>
</dbReference>
<dbReference type="Reactome" id="R-RNO-69481">
    <property type="pathway name" value="G2/M Checkpoints"/>
</dbReference>
<dbReference type="Reactome" id="R-RNO-69601">
    <property type="pathway name" value="Ubiquitin Mediated Degradation of Phosphorylated Cdc25A"/>
</dbReference>
<dbReference type="Reactome" id="R-RNO-75815">
    <property type="pathway name" value="Ubiquitin-dependent degradation of Cyclin D"/>
</dbReference>
<dbReference type="Reactome" id="R-RNO-8852276">
    <property type="pathway name" value="The role of GTSE1 in G2/M progression after G2 checkpoint"/>
</dbReference>
<dbReference type="Reactome" id="R-RNO-8854050">
    <property type="pathway name" value="FBXL7 down-regulates AURKA during mitotic entry and in early mitosis"/>
</dbReference>
<dbReference type="Reactome" id="R-RNO-8939236">
    <property type="pathway name" value="RUNX1 regulates transcription of genes involved in differentiation of HSCs"/>
</dbReference>
<dbReference type="Reactome" id="R-RNO-8941858">
    <property type="pathway name" value="Regulation of RUNX3 expression and activity"/>
</dbReference>
<dbReference type="Reactome" id="R-RNO-8948751">
    <property type="pathway name" value="Regulation of PTEN stability and activity"/>
</dbReference>
<dbReference type="Reactome" id="R-RNO-8951664">
    <property type="pathway name" value="Neddylation"/>
</dbReference>
<dbReference type="Reactome" id="R-RNO-9755511">
    <property type="pathway name" value="KEAP1-NFE2L2 pathway"/>
</dbReference>
<dbReference type="Reactome" id="R-RNO-9762114">
    <property type="pathway name" value="GSK3B and BTRC:CUL1-mediated-degradation of NFE2L2"/>
</dbReference>
<dbReference type="Reactome" id="R-RNO-983168">
    <property type="pathway name" value="Antigen processing: Ubiquitination &amp; Proteasome degradation"/>
</dbReference>
<dbReference type="Reactome" id="R-RNO-9907900">
    <property type="pathway name" value="Proteasome assembly"/>
</dbReference>
<dbReference type="PRO" id="PR:P18421"/>
<dbReference type="Proteomes" id="UP000002494">
    <property type="component" value="Unplaced"/>
</dbReference>
<dbReference type="GO" id="GO:0005737">
    <property type="term" value="C:cytoplasm"/>
    <property type="evidence" value="ECO:0000266"/>
    <property type="project" value="RGD"/>
</dbReference>
<dbReference type="GO" id="GO:0005634">
    <property type="term" value="C:nucleus"/>
    <property type="evidence" value="ECO:0000266"/>
    <property type="project" value="RGD"/>
</dbReference>
<dbReference type="GO" id="GO:0000502">
    <property type="term" value="C:proteasome complex"/>
    <property type="evidence" value="ECO:0000266"/>
    <property type="project" value="RGD"/>
</dbReference>
<dbReference type="GO" id="GO:0005839">
    <property type="term" value="C:proteasome core complex"/>
    <property type="evidence" value="ECO:0000250"/>
    <property type="project" value="UniProtKB"/>
</dbReference>
<dbReference type="GO" id="GO:0019774">
    <property type="term" value="C:proteasome core complex, beta-subunit complex"/>
    <property type="evidence" value="ECO:0000250"/>
    <property type="project" value="UniProtKB"/>
</dbReference>
<dbReference type="GO" id="GO:0051603">
    <property type="term" value="P:proteolysis involved in protein catabolic process"/>
    <property type="evidence" value="ECO:0000318"/>
    <property type="project" value="GO_Central"/>
</dbReference>
<dbReference type="CDD" id="cd03757">
    <property type="entry name" value="proteasome_beta_type_1"/>
    <property type="match status" value="1"/>
</dbReference>
<dbReference type="FunFam" id="3.60.20.10:FF:000033">
    <property type="entry name" value="Proteasome subunit beta"/>
    <property type="match status" value="1"/>
</dbReference>
<dbReference type="Gene3D" id="3.60.20.10">
    <property type="entry name" value="Glutamine Phosphoribosylpyrophosphate, subunit 1, domain 1"/>
    <property type="match status" value="1"/>
</dbReference>
<dbReference type="InterPro" id="IPR029055">
    <property type="entry name" value="Ntn_hydrolases_N"/>
</dbReference>
<dbReference type="InterPro" id="IPR016050">
    <property type="entry name" value="Proteasome_bsu_CS"/>
</dbReference>
<dbReference type="InterPro" id="IPR001353">
    <property type="entry name" value="Proteasome_sua/b"/>
</dbReference>
<dbReference type="InterPro" id="IPR023333">
    <property type="entry name" value="Proteasome_suB-type"/>
</dbReference>
<dbReference type="PANTHER" id="PTHR32194">
    <property type="entry name" value="METALLOPROTEASE TLDD"/>
    <property type="match status" value="1"/>
</dbReference>
<dbReference type="PANTHER" id="PTHR32194:SF2">
    <property type="entry name" value="PROTEASOME SUBUNIT BETA TYPE-1"/>
    <property type="match status" value="1"/>
</dbReference>
<dbReference type="Pfam" id="PF00227">
    <property type="entry name" value="Proteasome"/>
    <property type="match status" value="1"/>
</dbReference>
<dbReference type="SUPFAM" id="SSF56235">
    <property type="entry name" value="N-terminal nucleophile aminohydrolases (Ntn hydrolases)"/>
    <property type="match status" value="1"/>
</dbReference>
<dbReference type="PROSITE" id="PS00854">
    <property type="entry name" value="PROTEASOME_BETA_1"/>
    <property type="match status" value="1"/>
</dbReference>
<dbReference type="PROSITE" id="PS51476">
    <property type="entry name" value="PROTEASOME_BETA_2"/>
    <property type="match status" value="1"/>
</dbReference>
<organism>
    <name type="scientific">Rattus norvegicus</name>
    <name type="common">Rat</name>
    <dbReference type="NCBI Taxonomy" id="10116"/>
    <lineage>
        <taxon>Eukaryota</taxon>
        <taxon>Metazoa</taxon>
        <taxon>Chordata</taxon>
        <taxon>Craniata</taxon>
        <taxon>Vertebrata</taxon>
        <taxon>Euteleostomi</taxon>
        <taxon>Mammalia</taxon>
        <taxon>Eutheria</taxon>
        <taxon>Euarchontoglires</taxon>
        <taxon>Glires</taxon>
        <taxon>Rodentia</taxon>
        <taxon>Myomorpha</taxon>
        <taxon>Muroidea</taxon>
        <taxon>Muridae</taxon>
        <taxon>Murinae</taxon>
        <taxon>Rattus</taxon>
    </lineage>
</organism>
<keyword id="KW-0002">3D-structure</keyword>
<keyword id="KW-0007">Acetylation</keyword>
<keyword id="KW-0963">Cytoplasm</keyword>
<keyword id="KW-0903">Direct protein sequencing</keyword>
<keyword id="KW-0325">Glycoprotein</keyword>
<keyword id="KW-0539">Nucleus</keyword>
<keyword id="KW-0597">Phosphoprotein</keyword>
<keyword id="KW-0647">Proteasome</keyword>
<keyword id="KW-1185">Reference proteome</keyword>
<name>PSB1_RAT</name>
<accession>P18421</accession>
<gene>
    <name type="primary">Psmb1</name>
</gene>
<protein>
    <recommendedName>
        <fullName>Proteasome subunit beta type-1</fullName>
    </recommendedName>
    <alternativeName>
        <fullName>Macropain subunit C5</fullName>
    </alternativeName>
    <alternativeName>
        <fullName>Multicatalytic endopeptidase complex subunit C5</fullName>
    </alternativeName>
    <alternativeName>
        <fullName>Proteasome component C5</fullName>
    </alternativeName>
    <alternativeName>
        <fullName>Proteasome gamma chain</fullName>
    </alternativeName>
    <alternativeName>
        <fullName>Proteasome subunit beta-6</fullName>
        <shortName>beta-6</shortName>
    </alternativeName>
</protein>
<sequence length="240" mass="26479">MLSTAAYRDPDRELVMGPQGSAGPVQMRFSPYAFNGGTVLAIAGEDFSIVASDTRLSEGFSIHTRDSPKCYKLTDKTVIGCSGFHGDCLTLTKIIEARLKMYKHSNNKAMTTGAIAAMLSTILYSRRFFPYYVYNIIEGLDEEGKGAVYSFDPVGSYQRDSFKAGGSASAMLQPLLDNQVGFKNMQNVEHVPLTLDRAMRLVKDVFISAAERDVYTGDALRICIVTKEGIREETVPLRKD</sequence>
<proteinExistence type="evidence at protein level"/>